<protein>
    <recommendedName>
        <fullName>Chitooligosaccharide deacetylase</fullName>
        <ecNumber>3.5.1.-</ecNumber>
    </recommendedName>
    <alternativeName>
        <fullName>Nodulation protein B</fullName>
    </alternativeName>
</protein>
<keyword id="KW-0963">Cytoplasm</keyword>
<keyword id="KW-0378">Hydrolase</keyword>
<keyword id="KW-0479">Metal-binding</keyword>
<keyword id="KW-0536">Nodulation</keyword>
<keyword id="KW-0614">Plasmid</keyword>
<name>NODB_RHILV</name>
<gene>
    <name type="primary">nodB</name>
</gene>
<sequence>MKRPAYMSEVPVNHTSGQEARCVYLTFDDGPNPFCTPQILDVLAEHRVPATFFAIGSYVKDHPELIRRLVAEGHDVANHTMTHPDLATCDPKDVKREIDEAHQAIVSACPQALVRHLRAPYGVWTEDVLSASVRAGLGAVHWSADPRDWSCPGVDVIVDEVLAAARPGAIVLLHDGCPPDEVEQCSLAGLRDQTLIALSRIIPALHSRGFEIRSLP</sequence>
<evidence type="ECO:0000250" key="1"/>
<evidence type="ECO:0000255" key="2">
    <source>
        <dbReference type="PROSITE-ProRule" id="PRU01014"/>
    </source>
</evidence>
<evidence type="ECO:0000305" key="3"/>
<geneLocation type="plasmid">
    <name>sym pRL1JI</name>
</geneLocation>
<organism>
    <name type="scientific">Rhizobium leguminosarum bv. viciae</name>
    <dbReference type="NCBI Taxonomy" id="387"/>
    <lineage>
        <taxon>Bacteria</taxon>
        <taxon>Pseudomonadati</taxon>
        <taxon>Pseudomonadota</taxon>
        <taxon>Alphaproteobacteria</taxon>
        <taxon>Hyphomicrobiales</taxon>
        <taxon>Rhizobiaceae</taxon>
        <taxon>Rhizobium/Agrobacterium group</taxon>
        <taxon>Rhizobium</taxon>
    </lineage>
</organism>
<proteinExistence type="inferred from homology"/>
<comment type="function">
    <text>Is involved in generating a small heat-stable compound (Nod), an acylated oligomer of N-acetylglucosamine, that stimulates mitosis in various plant protoplasts.</text>
</comment>
<comment type="subcellular location">
    <subcellularLocation>
        <location>Cytoplasm</location>
    </subcellularLocation>
</comment>
<comment type="similarity">
    <text evidence="3">Belongs to the polysaccharide deacetylase family.</text>
</comment>
<feature type="chain" id="PRO_0000172754" description="Chitooligosaccharide deacetylase">
    <location>
        <begin position="1"/>
        <end position="216"/>
    </location>
</feature>
<feature type="domain" description="NodB homology" evidence="2">
    <location>
        <begin position="21"/>
        <end position="213"/>
    </location>
</feature>
<feature type="active site" description="Proton acceptor" evidence="1">
    <location>
        <position position="28"/>
    </location>
</feature>
<feature type="active site" description="Proton donor" evidence="1">
    <location>
        <position position="174"/>
    </location>
</feature>
<feature type="binding site" evidence="1">
    <location>
        <position position="79"/>
    </location>
    <ligand>
        <name>a divalent metal cation</name>
        <dbReference type="ChEBI" id="CHEBI:60240"/>
    </ligand>
</feature>
<feature type="binding site" evidence="1">
    <location>
        <position position="83"/>
    </location>
    <ligand>
        <name>a divalent metal cation</name>
        <dbReference type="ChEBI" id="CHEBI:60240"/>
    </ligand>
</feature>
<feature type="site" description="Raises pKa of active site His" evidence="1">
    <location>
        <position position="148"/>
    </location>
</feature>
<reference key="1">
    <citation type="journal article" date="1984" name="Nucleic Acids Res.">
        <title>DNA sequence of the Rhizobium leguminosarum nodulation genes nodAB and C required for root hair curling.</title>
        <authorList>
            <person name="Rossen L."/>
            <person name="Johnston A.W.B."/>
            <person name="Downie J.A."/>
        </authorList>
    </citation>
    <scope>NUCLEOTIDE SEQUENCE [GENOMIC DNA]</scope>
    <source>
        <strain>248</strain>
    </source>
</reference>
<dbReference type="EC" id="3.5.1.-"/>
<dbReference type="EMBL" id="Y00548">
    <property type="protein sequence ID" value="CAA68620.1"/>
    <property type="status" value="ALT_SEQ"/>
    <property type="molecule type" value="Genomic_DNA"/>
</dbReference>
<dbReference type="EMBL" id="X01650">
    <property type="protein sequence ID" value="CAA25813.1"/>
    <property type="molecule type" value="Genomic_DNA"/>
</dbReference>
<dbReference type="PIR" id="A03485">
    <property type="entry name" value="ZZZRBL"/>
</dbReference>
<dbReference type="SMR" id="P04339"/>
<dbReference type="OMA" id="VLFHNNA"/>
<dbReference type="GO" id="GO:0005737">
    <property type="term" value="C:cytoplasm"/>
    <property type="evidence" value="ECO:0007669"/>
    <property type="project" value="UniProtKB-SubCell"/>
</dbReference>
<dbReference type="GO" id="GO:0016020">
    <property type="term" value="C:membrane"/>
    <property type="evidence" value="ECO:0007669"/>
    <property type="project" value="TreeGrafter"/>
</dbReference>
<dbReference type="GO" id="GO:0016810">
    <property type="term" value="F:hydrolase activity, acting on carbon-nitrogen (but not peptide) bonds"/>
    <property type="evidence" value="ECO:0007669"/>
    <property type="project" value="InterPro"/>
</dbReference>
<dbReference type="GO" id="GO:0046872">
    <property type="term" value="F:metal ion binding"/>
    <property type="evidence" value="ECO:0007669"/>
    <property type="project" value="UniProtKB-KW"/>
</dbReference>
<dbReference type="GO" id="GO:0005975">
    <property type="term" value="P:carbohydrate metabolic process"/>
    <property type="evidence" value="ECO:0007669"/>
    <property type="project" value="InterPro"/>
</dbReference>
<dbReference type="Gene3D" id="3.20.20.370">
    <property type="entry name" value="Glycoside hydrolase/deacetylase"/>
    <property type="match status" value="1"/>
</dbReference>
<dbReference type="InterPro" id="IPR011330">
    <property type="entry name" value="Glyco_hydro/deAcase_b/a-brl"/>
</dbReference>
<dbReference type="InterPro" id="IPR002509">
    <property type="entry name" value="NODB_dom"/>
</dbReference>
<dbReference type="InterPro" id="IPR026402">
    <property type="entry name" value="Nodulat_NodB"/>
</dbReference>
<dbReference type="InterPro" id="IPR050248">
    <property type="entry name" value="Polysacc_deacetylase_ArnD"/>
</dbReference>
<dbReference type="NCBIfam" id="TIGR04243">
    <property type="entry name" value="nodulat_NodB"/>
    <property type="match status" value="1"/>
</dbReference>
<dbReference type="PANTHER" id="PTHR10587:SF133">
    <property type="entry name" value="CHITIN DEACETYLASE 1-RELATED"/>
    <property type="match status" value="1"/>
</dbReference>
<dbReference type="PANTHER" id="PTHR10587">
    <property type="entry name" value="GLYCOSYL TRANSFERASE-RELATED"/>
    <property type="match status" value="1"/>
</dbReference>
<dbReference type="Pfam" id="PF01522">
    <property type="entry name" value="Polysacc_deac_1"/>
    <property type="match status" value="1"/>
</dbReference>
<dbReference type="SUPFAM" id="SSF88713">
    <property type="entry name" value="Glycoside hydrolase/deacetylase"/>
    <property type="match status" value="1"/>
</dbReference>
<dbReference type="PROSITE" id="PS51677">
    <property type="entry name" value="NODB"/>
    <property type="match status" value="1"/>
</dbReference>
<accession>P04339</accession>